<evidence type="ECO:0000250" key="1">
    <source>
        <dbReference type="UniProtKB" id="O08689"/>
    </source>
</evidence>
<evidence type="ECO:0000250" key="2">
    <source>
        <dbReference type="UniProtKB" id="O14793"/>
    </source>
</evidence>
<evidence type="ECO:0000255" key="3"/>
<evidence type="ECO:0000305" key="4"/>
<feature type="signal peptide" evidence="3">
    <location>
        <begin position="1"/>
        <end position="23"/>
    </location>
</feature>
<feature type="propeptide" id="PRO_0000285564" evidence="3">
    <location>
        <begin position="24"/>
        <end position="266"/>
    </location>
</feature>
<feature type="chain" id="PRO_0000285565" description="Growth/differentiation factor 8">
    <location>
        <begin position="267"/>
        <end position="375"/>
    </location>
</feature>
<feature type="site" description="Cleavage" evidence="1">
    <location>
        <begin position="98"/>
        <end position="99"/>
    </location>
</feature>
<feature type="glycosylation site" description="N-linked (GlcNAc...) asparagine" evidence="3">
    <location>
        <position position="71"/>
    </location>
</feature>
<feature type="disulfide bond" evidence="2">
    <location>
        <begin position="272"/>
        <end position="282"/>
    </location>
</feature>
<feature type="disulfide bond" evidence="2">
    <location>
        <begin position="281"/>
        <end position="340"/>
    </location>
</feature>
<feature type="disulfide bond" evidence="2">
    <location>
        <begin position="309"/>
        <end position="372"/>
    </location>
</feature>
<feature type="disulfide bond" evidence="2">
    <location>
        <begin position="313"/>
        <end position="374"/>
    </location>
</feature>
<feature type="disulfide bond" description="Interchain" evidence="2">
    <location>
        <position position="339"/>
    </location>
</feature>
<gene>
    <name type="primary">MSTN</name>
    <name type="synonym">GDF8</name>
</gene>
<organism>
    <name type="scientific">Pan paniscus</name>
    <name type="common">Pygmy chimpanzee</name>
    <name type="synonym">Bonobo</name>
    <dbReference type="NCBI Taxonomy" id="9597"/>
    <lineage>
        <taxon>Eukaryota</taxon>
        <taxon>Metazoa</taxon>
        <taxon>Chordata</taxon>
        <taxon>Craniata</taxon>
        <taxon>Vertebrata</taxon>
        <taxon>Euteleostomi</taxon>
        <taxon>Mammalia</taxon>
        <taxon>Eutheria</taxon>
        <taxon>Euarchontoglires</taxon>
        <taxon>Primates</taxon>
        <taxon>Haplorrhini</taxon>
        <taxon>Catarrhini</taxon>
        <taxon>Hominidae</taxon>
        <taxon>Pan</taxon>
    </lineage>
</organism>
<proteinExistence type="inferred from homology"/>
<reference key="1">
    <citation type="journal article" date="2006" name="Am. J. Hum. Genet.">
        <title>Human adaptive evolution at myostatin (GDF8), a regulator of muscle growth.</title>
        <authorList>
            <person name="Saunders M.A."/>
            <person name="Good J.M."/>
            <person name="Lawrence E.C."/>
            <person name="Ferrell R.E."/>
            <person name="Li W.H."/>
            <person name="Nachman M.W."/>
        </authorList>
    </citation>
    <scope>NUCLEOTIDE SEQUENCE [GENOMIC DNA]</scope>
</reference>
<accession>A1C2U7</accession>
<comment type="function">
    <text evidence="1">Acts specifically as a negative regulator of skeletal muscle growth.</text>
</comment>
<comment type="subunit">
    <text evidence="1">Homodimer; disulfide-linked. Interacts with WFIKKN2, leading to inhibit its activity. Interacts with FSTL3.</text>
</comment>
<comment type="subcellular location">
    <subcellularLocation>
        <location evidence="1">Secreted</location>
    </subcellularLocation>
</comment>
<comment type="PTM">
    <text evidence="1">Synthesized as large precursor molecule that undergoes proteolytic cleavage to generate an N-terminal propeptide and a disulfide linked C-terminal dimer, which is the biologically active molecule. The circulating form consists of a latent complex of the C-terminal dimer and other proteins, including its propeptide, which maintain the C-terminal dimer in a latent, inactive state. Ligand activation requires additional cleavage of the prodomain by a tolloid-like metalloproteinase.</text>
</comment>
<comment type="similarity">
    <text evidence="4">Belongs to the TGF-beta family.</text>
</comment>
<dbReference type="EMBL" id="DQ927196">
    <property type="protein sequence ID" value="ABI48519.1"/>
    <property type="molecule type" value="Genomic_DNA"/>
</dbReference>
<dbReference type="EMBL" id="DQ927197">
    <property type="protein sequence ID" value="ABI48520.1"/>
    <property type="molecule type" value="Genomic_DNA"/>
</dbReference>
<dbReference type="EMBL" id="DQ927198">
    <property type="protein sequence ID" value="ABI48521.1"/>
    <property type="molecule type" value="Genomic_DNA"/>
</dbReference>
<dbReference type="RefSeq" id="XP_003825326.1">
    <property type="nucleotide sequence ID" value="XM_003825278.1"/>
</dbReference>
<dbReference type="RefSeq" id="XP_054964859.1">
    <property type="nucleotide sequence ID" value="XM_055108884.3"/>
</dbReference>
<dbReference type="SMR" id="A1C2U7"/>
<dbReference type="STRING" id="9597.ENSPPAP00000024996"/>
<dbReference type="GlyCosmos" id="A1C2U7">
    <property type="glycosylation" value="1 site, No reported glycans"/>
</dbReference>
<dbReference type="GeneID" id="100968757"/>
<dbReference type="eggNOG" id="KOG3900">
    <property type="taxonomic scope" value="Eukaryota"/>
</dbReference>
<dbReference type="OMA" id="CNACMWR"/>
<dbReference type="Proteomes" id="UP000240080">
    <property type="component" value="Unplaced"/>
</dbReference>
<dbReference type="GO" id="GO:0005615">
    <property type="term" value="C:extracellular space"/>
    <property type="evidence" value="ECO:0007669"/>
    <property type="project" value="UniProtKB-KW"/>
</dbReference>
<dbReference type="GO" id="GO:0005125">
    <property type="term" value="F:cytokine activity"/>
    <property type="evidence" value="ECO:0007669"/>
    <property type="project" value="UniProtKB-KW"/>
</dbReference>
<dbReference type="GO" id="GO:0008083">
    <property type="term" value="F:growth factor activity"/>
    <property type="evidence" value="ECO:0007669"/>
    <property type="project" value="UniProtKB-KW"/>
</dbReference>
<dbReference type="GO" id="GO:0008201">
    <property type="term" value="F:heparin binding"/>
    <property type="evidence" value="ECO:0007669"/>
    <property type="project" value="UniProtKB-KW"/>
</dbReference>
<dbReference type="GO" id="GO:0042802">
    <property type="term" value="F:identical protein binding"/>
    <property type="evidence" value="ECO:0000250"/>
    <property type="project" value="UniProtKB"/>
</dbReference>
<dbReference type="GO" id="GO:0014839">
    <property type="term" value="P:myoblast migration involved in skeletal muscle regeneration"/>
    <property type="evidence" value="ECO:0000250"/>
    <property type="project" value="UniProtKB"/>
</dbReference>
<dbReference type="GO" id="GO:2000818">
    <property type="term" value="P:negative regulation of myoblast proliferation"/>
    <property type="evidence" value="ECO:0000250"/>
    <property type="project" value="AgBase"/>
</dbReference>
<dbReference type="GO" id="GO:1902725">
    <property type="term" value="P:negative regulation of satellite cell differentiation"/>
    <property type="evidence" value="ECO:0000250"/>
    <property type="project" value="AgBase"/>
</dbReference>
<dbReference type="GO" id="GO:1902723">
    <property type="term" value="P:negative regulation of skeletal muscle satellite cell proliferation"/>
    <property type="evidence" value="ECO:0000250"/>
    <property type="project" value="AgBase"/>
</dbReference>
<dbReference type="GO" id="GO:0010592">
    <property type="term" value="P:positive regulation of lamellipodium assembly"/>
    <property type="evidence" value="ECO:0000250"/>
    <property type="project" value="UniProtKB"/>
</dbReference>
<dbReference type="GO" id="GO:0010759">
    <property type="term" value="P:positive regulation of macrophage chemotaxis"/>
    <property type="evidence" value="ECO:0000250"/>
    <property type="project" value="UniProtKB"/>
</dbReference>
<dbReference type="CDD" id="cd19388">
    <property type="entry name" value="TGF_beta_GDF8"/>
    <property type="match status" value="1"/>
</dbReference>
<dbReference type="FunFam" id="2.60.120.970:FF:000001">
    <property type="entry name" value="Growth/differentiation factor 8"/>
    <property type="match status" value="1"/>
</dbReference>
<dbReference type="FunFam" id="2.10.90.10:FF:000006">
    <property type="entry name" value="growth/differentiation factor 8"/>
    <property type="match status" value="1"/>
</dbReference>
<dbReference type="Gene3D" id="2.60.120.970">
    <property type="match status" value="1"/>
</dbReference>
<dbReference type="Gene3D" id="2.10.90.10">
    <property type="entry name" value="Cystine-knot cytokines"/>
    <property type="match status" value="1"/>
</dbReference>
<dbReference type="InterPro" id="IPR029034">
    <property type="entry name" value="Cystine-knot_cytokine"/>
</dbReference>
<dbReference type="InterPro" id="IPR001839">
    <property type="entry name" value="TGF-b_C"/>
</dbReference>
<dbReference type="InterPro" id="IPR001111">
    <property type="entry name" value="TGF-b_propeptide"/>
</dbReference>
<dbReference type="InterPro" id="IPR015615">
    <property type="entry name" value="TGF-beta-rel"/>
</dbReference>
<dbReference type="InterPro" id="IPR017948">
    <property type="entry name" value="TGFb_CS"/>
</dbReference>
<dbReference type="PANTHER" id="PTHR11848:SF150">
    <property type="entry name" value="GROWTH_DIFFERENTIATION FACTOR 8"/>
    <property type="match status" value="1"/>
</dbReference>
<dbReference type="PANTHER" id="PTHR11848">
    <property type="entry name" value="TGF-BETA FAMILY"/>
    <property type="match status" value="1"/>
</dbReference>
<dbReference type="Pfam" id="PF00019">
    <property type="entry name" value="TGF_beta"/>
    <property type="match status" value="1"/>
</dbReference>
<dbReference type="Pfam" id="PF00688">
    <property type="entry name" value="TGFb_propeptide"/>
    <property type="match status" value="1"/>
</dbReference>
<dbReference type="SMART" id="SM00204">
    <property type="entry name" value="TGFB"/>
    <property type="match status" value="1"/>
</dbReference>
<dbReference type="SUPFAM" id="SSF57501">
    <property type="entry name" value="Cystine-knot cytokines"/>
    <property type="match status" value="1"/>
</dbReference>
<dbReference type="PROSITE" id="PS00250">
    <property type="entry name" value="TGF_BETA_1"/>
    <property type="match status" value="1"/>
</dbReference>
<dbReference type="PROSITE" id="PS51362">
    <property type="entry name" value="TGF_BETA_2"/>
    <property type="match status" value="1"/>
</dbReference>
<sequence>MQKLQLCVYIYLFMLIVAGPVDLNENSEQKENVEKEGLCNACTWRQNTKSSRIEAIKIQILSKLRLETAPNISKDAIRQLLPKAPPLRELIDQYDVQRDDSSDGSLEDDDYHATTETIITMPTESDFLMQVDGKPKCCFFKFSSKIQYNKVVKAQLWIYLRPVETPTTVFVQILRLIKPMKDGTRYTGIRSLKLDMNPGTGIWQSIDVKTVLQNWLKQPESNLGIEIKALDENGHDLAVTFPGPGEDGLNPFLEVKVTDTPKRSRRDFGLDCDEHSTESRCCRYPLTVDFEAFGWDWIIAPKRYKANYCSGECEFVFLQKYPHTHLVHQANPRGSAGPCCTPTKMSPINMLYFNGKEQIIYGKIPAMVVDRCGCS</sequence>
<name>GDF8_PANPA</name>
<protein>
    <recommendedName>
        <fullName>Growth/differentiation factor 8</fullName>
        <shortName>GDF-8</shortName>
    </recommendedName>
    <alternativeName>
        <fullName>Myostatin</fullName>
    </alternativeName>
</protein>
<keyword id="KW-0165">Cleavage on pair of basic residues</keyword>
<keyword id="KW-0202">Cytokine</keyword>
<keyword id="KW-1015">Disulfide bond</keyword>
<keyword id="KW-0325">Glycoprotein</keyword>
<keyword id="KW-0339">Growth factor</keyword>
<keyword id="KW-0358">Heparin-binding</keyword>
<keyword id="KW-1185">Reference proteome</keyword>
<keyword id="KW-0964">Secreted</keyword>
<keyword id="KW-0732">Signal</keyword>